<dbReference type="EMBL" id="AJ417432">
    <property type="protein sequence ID" value="CAD10144.1"/>
    <property type="molecule type" value="Genomic_DNA"/>
</dbReference>
<dbReference type="RefSeq" id="NP_001009242.1">
    <property type="nucleotide sequence ID" value="NM_001009242.1"/>
</dbReference>
<dbReference type="SMR" id="Q95KU1"/>
<dbReference type="FunCoup" id="Q95KU1">
    <property type="interactions" value="27"/>
</dbReference>
<dbReference type="STRING" id="9685.ENSFCAP00000000085"/>
<dbReference type="GlyCosmos" id="Q95KU1">
    <property type="glycosylation" value="2 sites, No reported glycans"/>
</dbReference>
<dbReference type="PaxDb" id="9685-ENSFCAP00000000085"/>
<dbReference type="GeneID" id="493762"/>
<dbReference type="KEGG" id="fca:493762"/>
<dbReference type="CTD" id="6010"/>
<dbReference type="eggNOG" id="KOG3656">
    <property type="taxonomic scope" value="Eukaryota"/>
</dbReference>
<dbReference type="InParanoid" id="Q95KU1"/>
<dbReference type="OrthoDB" id="5962323at2759"/>
<dbReference type="Proteomes" id="UP000011712">
    <property type="component" value="Unplaced"/>
</dbReference>
<dbReference type="GO" id="GO:0016020">
    <property type="term" value="C:membrane"/>
    <property type="evidence" value="ECO:0000250"/>
    <property type="project" value="UniProtKB"/>
</dbReference>
<dbReference type="GO" id="GO:0097381">
    <property type="term" value="C:photoreceptor disc membrane"/>
    <property type="evidence" value="ECO:0000250"/>
    <property type="project" value="UniProtKB"/>
</dbReference>
<dbReference type="GO" id="GO:0060342">
    <property type="term" value="C:photoreceptor inner segment membrane"/>
    <property type="evidence" value="ECO:0000250"/>
    <property type="project" value="UniProtKB"/>
</dbReference>
<dbReference type="GO" id="GO:0001750">
    <property type="term" value="C:photoreceptor outer segment"/>
    <property type="evidence" value="ECO:0000318"/>
    <property type="project" value="GO_Central"/>
</dbReference>
<dbReference type="GO" id="GO:0042622">
    <property type="term" value="C:photoreceptor outer segment membrane"/>
    <property type="evidence" value="ECO:0000250"/>
    <property type="project" value="UniProtKB"/>
</dbReference>
<dbReference type="GO" id="GO:0005886">
    <property type="term" value="C:plasma membrane"/>
    <property type="evidence" value="ECO:0000250"/>
    <property type="project" value="UniProtKB"/>
</dbReference>
<dbReference type="GO" id="GO:0005502">
    <property type="term" value="F:11-cis retinal binding"/>
    <property type="evidence" value="ECO:0000250"/>
    <property type="project" value="UniProtKB"/>
</dbReference>
<dbReference type="GO" id="GO:0008020">
    <property type="term" value="F:G protein-coupled photoreceptor activity"/>
    <property type="evidence" value="ECO:0000250"/>
    <property type="project" value="UniProtKB"/>
</dbReference>
<dbReference type="GO" id="GO:0046872">
    <property type="term" value="F:metal ion binding"/>
    <property type="evidence" value="ECO:0007669"/>
    <property type="project" value="UniProtKB-KW"/>
</dbReference>
<dbReference type="GO" id="GO:0016038">
    <property type="term" value="P:absorption of visible light"/>
    <property type="evidence" value="ECO:0000250"/>
    <property type="project" value="AgBase"/>
</dbReference>
<dbReference type="GO" id="GO:0071482">
    <property type="term" value="P:cellular response to light stimulus"/>
    <property type="evidence" value="ECO:0000318"/>
    <property type="project" value="GO_Central"/>
</dbReference>
<dbReference type="GO" id="GO:0016056">
    <property type="term" value="P:G protein-coupled opsin signaling pathway"/>
    <property type="evidence" value="ECO:0000250"/>
    <property type="project" value="UniProtKB"/>
</dbReference>
<dbReference type="GO" id="GO:0007186">
    <property type="term" value="P:G protein-coupled receptor signaling pathway"/>
    <property type="evidence" value="ECO:0000250"/>
    <property type="project" value="UniProtKB"/>
</dbReference>
<dbReference type="GO" id="GO:0007602">
    <property type="term" value="P:phototransduction"/>
    <property type="evidence" value="ECO:0000318"/>
    <property type="project" value="GO_Central"/>
</dbReference>
<dbReference type="GO" id="GO:0007601">
    <property type="term" value="P:visual perception"/>
    <property type="evidence" value="ECO:0007669"/>
    <property type="project" value="UniProtKB-KW"/>
</dbReference>
<dbReference type="CDD" id="cd15080">
    <property type="entry name" value="7tmA_MWS_opsin"/>
    <property type="match status" value="1"/>
</dbReference>
<dbReference type="FunFam" id="1.20.1070.10:FF:000018">
    <property type="entry name" value="Rhodopsin"/>
    <property type="match status" value="1"/>
</dbReference>
<dbReference type="Gene3D" id="1.20.1070.10">
    <property type="entry name" value="Rhodopsin 7-helix transmembrane proteins"/>
    <property type="match status" value="1"/>
</dbReference>
<dbReference type="InterPro" id="IPR050125">
    <property type="entry name" value="GPCR_opsins"/>
</dbReference>
<dbReference type="InterPro" id="IPR000276">
    <property type="entry name" value="GPCR_Rhodpsn"/>
</dbReference>
<dbReference type="InterPro" id="IPR017452">
    <property type="entry name" value="GPCR_Rhodpsn_7TM"/>
</dbReference>
<dbReference type="InterPro" id="IPR001760">
    <property type="entry name" value="Opsin"/>
</dbReference>
<dbReference type="InterPro" id="IPR027430">
    <property type="entry name" value="Retinal_BS"/>
</dbReference>
<dbReference type="InterPro" id="IPR000732">
    <property type="entry name" value="Rhodopsin"/>
</dbReference>
<dbReference type="InterPro" id="IPR019477">
    <property type="entry name" value="Rhodopsin_N"/>
</dbReference>
<dbReference type="PANTHER" id="PTHR24240">
    <property type="entry name" value="OPSIN"/>
    <property type="match status" value="1"/>
</dbReference>
<dbReference type="Pfam" id="PF00001">
    <property type="entry name" value="7tm_1"/>
    <property type="match status" value="1"/>
</dbReference>
<dbReference type="Pfam" id="PF10413">
    <property type="entry name" value="Rhodopsin_N"/>
    <property type="match status" value="1"/>
</dbReference>
<dbReference type="PRINTS" id="PR00237">
    <property type="entry name" value="GPCRRHODOPSN"/>
</dbReference>
<dbReference type="PRINTS" id="PR00238">
    <property type="entry name" value="OPSIN"/>
</dbReference>
<dbReference type="PRINTS" id="PR00579">
    <property type="entry name" value="RHODOPSIN"/>
</dbReference>
<dbReference type="SUPFAM" id="SSF81321">
    <property type="entry name" value="Family A G protein-coupled receptor-like"/>
    <property type="match status" value="1"/>
</dbReference>
<dbReference type="PROSITE" id="PS00237">
    <property type="entry name" value="G_PROTEIN_RECEP_F1_1"/>
    <property type="match status" value="1"/>
</dbReference>
<dbReference type="PROSITE" id="PS50262">
    <property type="entry name" value="G_PROTEIN_RECEP_F1_2"/>
    <property type="match status" value="1"/>
</dbReference>
<dbReference type="PROSITE" id="PS00238">
    <property type="entry name" value="OPSIN"/>
    <property type="match status" value="1"/>
</dbReference>
<gene>
    <name type="primary">RHO</name>
    <name type="synonym">OPS</name>
</gene>
<keyword id="KW-0007">Acetylation</keyword>
<keyword id="KW-0966">Cell projection</keyword>
<keyword id="KW-0157">Chromophore</keyword>
<keyword id="KW-1015">Disulfide bond</keyword>
<keyword id="KW-0297">G-protein coupled receptor</keyword>
<keyword id="KW-0325">Glycoprotein</keyword>
<keyword id="KW-0449">Lipoprotein</keyword>
<keyword id="KW-0472">Membrane</keyword>
<keyword id="KW-0479">Metal-binding</keyword>
<keyword id="KW-0564">Palmitate</keyword>
<keyword id="KW-0597">Phosphoprotein</keyword>
<keyword id="KW-0600">Photoreceptor protein</keyword>
<keyword id="KW-0675">Receptor</keyword>
<keyword id="KW-1185">Reference proteome</keyword>
<keyword id="KW-0681">Retinal protein</keyword>
<keyword id="KW-0716">Sensory transduction</keyword>
<keyword id="KW-0807">Transducer</keyword>
<keyword id="KW-0812">Transmembrane</keyword>
<keyword id="KW-1133">Transmembrane helix</keyword>
<keyword id="KW-0844">Vision</keyword>
<keyword id="KW-0862">Zinc</keyword>
<evidence type="ECO:0000250" key="1">
    <source>
        <dbReference type="UniProtKB" id="P02699"/>
    </source>
</evidence>
<evidence type="ECO:0000250" key="2">
    <source>
        <dbReference type="UniProtKB" id="P02700"/>
    </source>
</evidence>
<evidence type="ECO:0000250" key="3">
    <source>
        <dbReference type="UniProtKB" id="P08100"/>
    </source>
</evidence>
<evidence type="ECO:0000255" key="4"/>
<evidence type="ECO:0000255" key="5">
    <source>
        <dbReference type="PROSITE-ProRule" id="PRU00521"/>
    </source>
</evidence>
<evidence type="ECO:0000305" key="6"/>
<sequence>MNGTEGPNFYVPFSNKTGVVRSPFEYPQYYLAEPWQFSMLAAYMFLLIVLGFPINFLTLYVTVQHKKLRTPLNYILLNLAVADLFMVFGGFTTTLYTSLHGYFVFGPTGCNLEGFFATLGGEIALWSLVVLAIERYVVVCKPMSNFRFGENHAIMGVAFTWVMALACAAPPLVGWSRYIPEGMQCSCGIDYYTLKPEVNNESFVIYMFVVHFTIPMIVIFFCYGQLVFTVKEAAAQQQESATTQKAEKEVTRMVIIMVIAFLICWVPYASVAFYIFTHQGSNFGPIFMTLPAFFAKSSSIYNPVIYIMMNKQFRNCMLTTLCCGKNPLGDDEASTTGSKTETSQVAPA</sequence>
<feature type="chain" id="PRO_0000227019" description="Rhodopsin">
    <location>
        <begin position="1"/>
        <end position="348"/>
    </location>
</feature>
<feature type="topological domain" description="Extracellular" evidence="6">
    <location>
        <begin position="1"/>
        <end position="36"/>
    </location>
</feature>
<feature type="transmembrane region" description="Helical; Name=1" evidence="1">
    <location>
        <begin position="37"/>
        <end position="61"/>
    </location>
</feature>
<feature type="topological domain" description="Cytoplasmic" evidence="6">
    <location>
        <begin position="62"/>
        <end position="73"/>
    </location>
</feature>
<feature type="transmembrane region" description="Helical; Name=2" evidence="1">
    <location>
        <begin position="74"/>
        <end position="96"/>
    </location>
</feature>
<feature type="topological domain" description="Extracellular" evidence="6">
    <location>
        <begin position="97"/>
        <end position="110"/>
    </location>
</feature>
<feature type="transmembrane region" description="Helical; Name=3" evidence="1">
    <location>
        <begin position="111"/>
        <end position="133"/>
    </location>
</feature>
<feature type="topological domain" description="Cytoplasmic" evidence="6">
    <location>
        <begin position="134"/>
        <end position="152"/>
    </location>
</feature>
<feature type="transmembrane region" description="Helical; Name=4" evidence="1">
    <location>
        <begin position="153"/>
        <end position="173"/>
    </location>
</feature>
<feature type="topological domain" description="Extracellular" evidence="6">
    <location>
        <begin position="174"/>
        <end position="202"/>
    </location>
</feature>
<feature type="transmembrane region" description="Helical; Name=5" evidence="1">
    <location>
        <begin position="203"/>
        <end position="224"/>
    </location>
</feature>
<feature type="topological domain" description="Cytoplasmic" evidence="6">
    <location>
        <begin position="225"/>
        <end position="252"/>
    </location>
</feature>
<feature type="transmembrane region" description="Helical; Name=6" evidence="1">
    <location>
        <begin position="253"/>
        <end position="274"/>
    </location>
</feature>
<feature type="topological domain" description="Extracellular" evidence="6">
    <location>
        <begin position="275"/>
        <end position="286"/>
    </location>
</feature>
<feature type="transmembrane region" description="Helical; Name=7" evidence="1">
    <location>
        <begin position="287"/>
        <end position="308"/>
    </location>
</feature>
<feature type="topological domain" description="Cytoplasmic" evidence="6">
    <location>
        <begin position="309"/>
        <end position="348"/>
    </location>
</feature>
<feature type="region of interest" description="Interaction with SAG" evidence="1">
    <location>
        <begin position="330"/>
        <end position="348"/>
    </location>
</feature>
<feature type="short sequence motif" description="'Ionic lock' involved in activated form stabilization" evidence="1">
    <location>
        <begin position="134"/>
        <end position="136"/>
    </location>
</feature>
<feature type="binding site" evidence="1">
    <location>
        <position position="201"/>
    </location>
    <ligand>
        <name>Zn(2+)</name>
        <dbReference type="ChEBI" id="CHEBI:29105"/>
    </ligand>
</feature>
<feature type="binding site" evidence="1">
    <location>
        <position position="279"/>
    </location>
    <ligand>
        <name>Zn(2+)</name>
        <dbReference type="ChEBI" id="CHEBI:29105"/>
    </ligand>
</feature>
<feature type="site" description="Plays an important role in the conformation switch to the active conformation" evidence="1">
    <location>
        <position position="113"/>
    </location>
</feature>
<feature type="modified residue" description="N-acetylmethionine" evidence="1">
    <location>
        <position position="1"/>
    </location>
</feature>
<feature type="modified residue" description="N6-(retinylidene)lysine" evidence="1">
    <location>
        <position position="296"/>
    </location>
</feature>
<feature type="modified residue" description="Phosphoserine" evidence="2">
    <location>
        <position position="334"/>
    </location>
</feature>
<feature type="modified residue" description="Phosphothreonine" evidence="2">
    <location>
        <position position="335"/>
    </location>
</feature>
<feature type="modified residue" description="Phosphothreonine" evidence="2">
    <location>
        <position position="336"/>
    </location>
</feature>
<feature type="modified residue" description="Phosphoserine" evidence="2">
    <location>
        <position position="338"/>
    </location>
</feature>
<feature type="modified residue" description="Phosphothreonine" evidence="1">
    <location>
        <position position="340"/>
    </location>
</feature>
<feature type="modified residue" description="Phosphothreonine" evidence="1">
    <location>
        <position position="342"/>
    </location>
</feature>
<feature type="modified residue" description="Phosphoserine" evidence="1">
    <location>
        <position position="343"/>
    </location>
</feature>
<feature type="lipid moiety-binding region" description="S-palmitoyl cysteine" evidence="1">
    <location>
        <position position="322"/>
    </location>
</feature>
<feature type="lipid moiety-binding region" description="S-palmitoyl cysteine" evidence="1">
    <location>
        <position position="323"/>
    </location>
</feature>
<feature type="glycosylation site" description="N-linked (GlcNAc...) asparagine" evidence="4">
    <location>
        <position position="2"/>
    </location>
</feature>
<feature type="glycosylation site" description="N-linked (GlcNAc...) asparagine" evidence="4">
    <location>
        <position position="15"/>
    </location>
</feature>
<feature type="disulfide bond" evidence="5">
    <location>
        <begin position="110"/>
        <end position="187"/>
    </location>
</feature>
<comment type="function">
    <text evidence="1 3">Photoreceptor required for image-forming vision at low light intensity. Required for photoreceptor cell viability after birth (By similarity). Light-induced isomerization of 11-cis to all-trans retinal triggers a conformational change that activates signaling via G-proteins. Subsequent receptor phosphorylation mediates displacement of the bound G-protein alpha subunit by the arrestin SAG and terminates signaling (By similarity).</text>
</comment>
<comment type="subunit">
    <text evidence="1 3">Homodimer (By similarity). May form a complex composed of RHO, GRK1 and RCVRN in a Ca(2+)-dependent manner; RCVRN prevents the interaction between GRK1 and RHO (By similarity). Interacts with GRK1 (By similarity). Interacts (phosphorylated form) with SAG. Interacts with GNAT1. Interacts with GNAT3. SAG and G-proteins compete for a common binding site (By similarity). Interacts with PRCD; the interaction promotes PRCD stability. Forms a complex with ASAP1 and ARF4. Forms a complex with ASAP1, RAB11A, Rabin8/RAB3IP, ARF4 and RAB11FIP3; the complex regulates Golgi-to-cilia rhodopsin/RHO transport in photoreceptors (By similarity).</text>
</comment>
<comment type="subcellular location">
    <subcellularLocation>
        <location evidence="1">Membrane</location>
        <topology evidence="1">Multi-pass membrane protein</topology>
    </subcellularLocation>
    <subcellularLocation>
        <location evidence="1">Cell projection</location>
        <location evidence="1">Cilium</location>
        <location evidence="1">Photoreceptor outer segment</location>
    </subcellularLocation>
    <text evidence="3">Synthesized in the inner segment (IS) of rod photoreceptor cells before vectorial transport to disk membranes in the rod outer segment (OS) photosensory cilia.</text>
</comment>
<comment type="PTM">
    <text evidence="1">Phosphorylated on some or all of the serine and threonine residues present in the C-terminal region.</text>
</comment>
<comment type="PTM">
    <text evidence="1">Contains one covalently linked retinal chromophore. Upon light absorption, the covalently bound 11-cis-retinal is converted to all-trans-retinal. After hydrolysis of the Schiff base and release of the covalently bound all-trans-retinal, active rhodopsin is regenerated by binding of a fresh molecule of 11-cis-retinal.</text>
</comment>
<comment type="similarity">
    <text evidence="5">Belongs to the G-protein coupled receptor 1 family. Opsin subfamily.</text>
</comment>
<accession>Q95KU1</accession>
<protein>
    <recommendedName>
        <fullName>Rhodopsin</fullName>
    </recommendedName>
</protein>
<proteinExistence type="inferred from homology"/>
<organism>
    <name type="scientific">Felis catus</name>
    <name type="common">Cat</name>
    <name type="synonym">Felis silvestris catus</name>
    <dbReference type="NCBI Taxonomy" id="9685"/>
    <lineage>
        <taxon>Eukaryota</taxon>
        <taxon>Metazoa</taxon>
        <taxon>Chordata</taxon>
        <taxon>Craniata</taxon>
        <taxon>Vertebrata</taxon>
        <taxon>Euteleostomi</taxon>
        <taxon>Mammalia</taxon>
        <taxon>Eutheria</taxon>
        <taxon>Laurasiatheria</taxon>
        <taxon>Carnivora</taxon>
        <taxon>Feliformia</taxon>
        <taxon>Felidae</taxon>
        <taxon>Felinae</taxon>
        <taxon>Felis</taxon>
    </lineage>
</organism>
<reference key="1">
    <citation type="journal article" date="2002" name="Anim. Genet.">
        <title>Autosomal dominant retinal dystrophy (Rdy) in Abyssinian cats: exclusion of PDE6G and ROM1 and likely exclusion of rhodopsin as candidate genes.</title>
        <authorList>
            <person name="Gould D.J."/>
            <person name="Sargan D.R."/>
        </authorList>
    </citation>
    <scope>NUCLEOTIDE SEQUENCE [GENOMIC DNA]</scope>
</reference>
<name>OPSD_FELCA</name>